<evidence type="ECO:0000255" key="1">
    <source>
        <dbReference type="HAMAP-Rule" id="MF_00500"/>
    </source>
</evidence>
<evidence type="ECO:0000256" key="2">
    <source>
        <dbReference type="SAM" id="MobiDB-lite"/>
    </source>
</evidence>
<evidence type="ECO:0000305" key="3"/>
<organism>
    <name type="scientific">Shewanella loihica (strain ATCC BAA-1088 / PV-4)</name>
    <dbReference type="NCBI Taxonomy" id="323850"/>
    <lineage>
        <taxon>Bacteria</taxon>
        <taxon>Pseudomonadati</taxon>
        <taxon>Pseudomonadota</taxon>
        <taxon>Gammaproteobacteria</taxon>
        <taxon>Alteromonadales</taxon>
        <taxon>Shewanellaceae</taxon>
        <taxon>Shewanella</taxon>
    </lineage>
</organism>
<reference key="1">
    <citation type="submission" date="2007-03" db="EMBL/GenBank/DDBJ databases">
        <title>Complete sequence of Shewanella loihica PV-4.</title>
        <authorList>
            <consortium name="US DOE Joint Genome Institute"/>
            <person name="Copeland A."/>
            <person name="Lucas S."/>
            <person name="Lapidus A."/>
            <person name="Barry K."/>
            <person name="Detter J.C."/>
            <person name="Glavina del Rio T."/>
            <person name="Hammon N."/>
            <person name="Israni S."/>
            <person name="Dalin E."/>
            <person name="Tice H."/>
            <person name="Pitluck S."/>
            <person name="Chain P."/>
            <person name="Malfatti S."/>
            <person name="Shin M."/>
            <person name="Vergez L."/>
            <person name="Schmutz J."/>
            <person name="Larimer F."/>
            <person name="Land M."/>
            <person name="Hauser L."/>
            <person name="Kyrpides N."/>
            <person name="Mikhailova N."/>
            <person name="Romine M.F."/>
            <person name="Serres G."/>
            <person name="Fredrickson J."/>
            <person name="Tiedje J."/>
            <person name="Richardson P."/>
        </authorList>
    </citation>
    <scope>NUCLEOTIDE SEQUENCE [LARGE SCALE GENOMIC DNA]</scope>
    <source>
        <strain>ATCC BAA-1088 / PV-4</strain>
    </source>
</reference>
<comment type="function">
    <text evidence="1">Binds directly to 16S ribosomal RNA.</text>
</comment>
<comment type="similarity">
    <text evidence="1">Belongs to the bacterial ribosomal protein bS20 family.</text>
</comment>
<name>RS20_SHELP</name>
<dbReference type="EMBL" id="CP000606">
    <property type="protein sequence ID" value="ABO22967.1"/>
    <property type="molecule type" value="Genomic_DNA"/>
</dbReference>
<dbReference type="RefSeq" id="WP_011864900.1">
    <property type="nucleotide sequence ID" value="NC_009092.1"/>
</dbReference>
<dbReference type="SMR" id="A3QBW9"/>
<dbReference type="STRING" id="323850.Shew_1096"/>
<dbReference type="KEGG" id="slo:Shew_1096"/>
<dbReference type="eggNOG" id="COG0268">
    <property type="taxonomic scope" value="Bacteria"/>
</dbReference>
<dbReference type="HOGENOM" id="CLU_160655_4_0_6"/>
<dbReference type="OrthoDB" id="9807974at2"/>
<dbReference type="Proteomes" id="UP000001558">
    <property type="component" value="Chromosome"/>
</dbReference>
<dbReference type="GO" id="GO:0005829">
    <property type="term" value="C:cytosol"/>
    <property type="evidence" value="ECO:0007669"/>
    <property type="project" value="TreeGrafter"/>
</dbReference>
<dbReference type="GO" id="GO:0015935">
    <property type="term" value="C:small ribosomal subunit"/>
    <property type="evidence" value="ECO:0007669"/>
    <property type="project" value="TreeGrafter"/>
</dbReference>
<dbReference type="GO" id="GO:0070181">
    <property type="term" value="F:small ribosomal subunit rRNA binding"/>
    <property type="evidence" value="ECO:0007669"/>
    <property type="project" value="TreeGrafter"/>
</dbReference>
<dbReference type="GO" id="GO:0003735">
    <property type="term" value="F:structural constituent of ribosome"/>
    <property type="evidence" value="ECO:0007669"/>
    <property type="project" value="InterPro"/>
</dbReference>
<dbReference type="GO" id="GO:0006412">
    <property type="term" value="P:translation"/>
    <property type="evidence" value="ECO:0007669"/>
    <property type="project" value="UniProtKB-UniRule"/>
</dbReference>
<dbReference type="FunFam" id="1.20.58.110:FF:000001">
    <property type="entry name" value="30S ribosomal protein S20"/>
    <property type="match status" value="1"/>
</dbReference>
<dbReference type="Gene3D" id="1.20.58.110">
    <property type="entry name" value="Ribosomal protein S20"/>
    <property type="match status" value="1"/>
</dbReference>
<dbReference type="HAMAP" id="MF_00500">
    <property type="entry name" value="Ribosomal_bS20"/>
    <property type="match status" value="1"/>
</dbReference>
<dbReference type="InterPro" id="IPR002583">
    <property type="entry name" value="Ribosomal_bS20"/>
</dbReference>
<dbReference type="InterPro" id="IPR036510">
    <property type="entry name" value="Ribosomal_bS20_sf"/>
</dbReference>
<dbReference type="NCBIfam" id="TIGR00029">
    <property type="entry name" value="S20"/>
    <property type="match status" value="1"/>
</dbReference>
<dbReference type="PANTHER" id="PTHR33398">
    <property type="entry name" value="30S RIBOSOMAL PROTEIN S20"/>
    <property type="match status" value="1"/>
</dbReference>
<dbReference type="PANTHER" id="PTHR33398:SF1">
    <property type="entry name" value="SMALL RIBOSOMAL SUBUNIT PROTEIN BS20C"/>
    <property type="match status" value="1"/>
</dbReference>
<dbReference type="Pfam" id="PF01649">
    <property type="entry name" value="Ribosomal_S20p"/>
    <property type="match status" value="1"/>
</dbReference>
<dbReference type="SUPFAM" id="SSF46992">
    <property type="entry name" value="Ribosomal protein S20"/>
    <property type="match status" value="1"/>
</dbReference>
<sequence length="88" mass="9716">MANSKSAKKRALQSEKRRQHNASRRSMLRSYVKKVIAAINTGDHKAATEAFNAAQPIVDRMATKGLIHKNKAARHKARLNAKIKALAA</sequence>
<protein>
    <recommendedName>
        <fullName evidence="1">Small ribosomal subunit protein bS20</fullName>
    </recommendedName>
    <alternativeName>
        <fullName evidence="3">30S ribosomal protein S20</fullName>
    </alternativeName>
</protein>
<accession>A3QBW9</accession>
<proteinExistence type="inferred from homology"/>
<gene>
    <name evidence="1" type="primary">rpsT</name>
    <name type="ordered locus">Shew_1096</name>
</gene>
<feature type="chain" id="PRO_1000014652" description="Small ribosomal subunit protein bS20">
    <location>
        <begin position="1"/>
        <end position="88"/>
    </location>
</feature>
<feature type="region of interest" description="Disordered" evidence="2">
    <location>
        <begin position="1"/>
        <end position="27"/>
    </location>
</feature>
<keyword id="KW-1185">Reference proteome</keyword>
<keyword id="KW-0687">Ribonucleoprotein</keyword>
<keyword id="KW-0689">Ribosomal protein</keyword>
<keyword id="KW-0694">RNA-binding</keyword>
<keyword id="KW-0699">rRNA-binding</keyword>